<accession>P63172</accession>
<accession>Q15763</accession>
<accession>Q5VTU4</accession>
<evidence type="ECO:0000250" key="1"/>
<evidence type="ECO:0000250" key="2">
    <source>
        <dbReference type="UniProtKB" id="P51807"/>
    </source>
</evidence>
<evidence type="ECO:0000269" key="3">
    <source>
    </source>
</evidence>
<evidence type="ECO:0000269" key="4">
    <source>
    </source>
</evidence>
<evidence type="ECO:0000269" key="5">
    <source>
    </source>
</evidence>
<evidence type="ECO:0000269" key="6">
    <source>
    </source>
</evidence>
<evidence type="ECO:0000269" key="7">
    <source>
    </source>
</evidence>
<evidence type="ECO:0000269" key="8">
    <source>
    </source>
</evidence>
<evidence type="ECO:0000269" key="9">
    <source>
    </source>
</evidence>
<evidence type="ECO:0000269" key="10">
    <source>
    </source>
</evidence>
<evidence type="ECO:0000305" key="11"/>
<evidence type="ECO:0007744" key="12">
    <source>
    </source>
</evidence>
<evidence type="ECO:0007744" key="13">
    <source>
    </source>
</evidence>
<evidence type="ECO:0007744" key="14">
    <source>
    </source>
</evidence>
<evidence type="ECO:0007829" key="15">
    <source>
        <dbReference type="PDB" id="5JPW"/>
    </source>
</evidence>
<evidence type="ECO:0007829" key="16">
    <source>
        <dbReference type="PDB" id="8RGI"/>
    </source>
</evidence>
<name>DYLT1_HUMAN</name>
<sequence length="113" mass="12452">MEDYQAAEETAFVVDEVSNIVKEAIESAIGGNAYQHSKVNQWTTNVVEQTLSQLTKLGKPFKYIVTCVIMQKNGAGLHTASSCFWDSSTDGSCTVRWENKTMYCIVSAFGLSI</sequence>
<dbReference type="EMBL" id="U56255">
    <property type="protein sequence ID" value="AAB03318.1"/>
    <property type="molecule type" value="mRNA"/>
</dbReference>
<dbReference type="EMBL" id="D50663">
    <property type="protein sequence ID" value="BAA09317.1"/>
    <property type="molecule type" value="mRNA"/>
</dbReference>
<dbReference type="EMBL" id="EU862237">
    <property type="protein sequence ID" value="ACF74976.1"/>
    <property type="molecule type" value="mRNA"/>
</dbReference>
<dbReference type="EMBL" id="AK315601">
    <property type="protein sequence ID" value="BAG37971.1"/>
    <property type="molecule type" value="mRNA"/>
</dbReference>
<dbReference type="EMBL" id="CR456931">
    <property type="protein sequence ID" value="CAG33212.1"/>
    <property type="molecule type" value="mRNA"/>
</dbReference>
<dbReference type="EMBL" id="AL591025">
    <property type="status" value="NOT_ANNOTATED_CDS"/>
    <property type="molecule type" value="Genomic_DNA"/>
</dbReference>
<dbReference type="EMBL" id="AL589931">
    <property type="status" value="NOT_ANNOTATED_CDS"/>
    <property type="molecule type" value="Genomic_DNA"/>
</dbReference>
<dbReference type="EMBL" id="CH471051">
    <property type="protein sequence ID" value="EAW47657.1"/>
    <property type="molecule type" value="Genomic_DNA"/>
</dbReference>
<dbReference type="EMBL" id="BC029412">
    <property type="protein sequence ID" value="AAH29412.1"/>
    <property type="molecule type" value="mRNA"/>
</dbReference>
<dbReference type="EMBL" id="BC105588">
    <property type="protein sequence ID" value="AAI05589.1"/>
    <property type="molecule type" value="mRNA"/>
</dbReference>
<dbReference type="CCDS" id="CCDS5257.1"/>
<dbReference type="RefSeq" id="NP_006510.1">
    <property type="nucleotide sequence ID" value="NM_006519.4"/>
</dbReference>
<dbReference type="PDB" id="5JPW">
    <property type="method" value="NMR"/>
    <property type="chains" value="A/B=1-113"/>
</dbReference>
<dbReference type="PDB" id="8J07">
    <property type="method" value="EM"/>
    <property type="resolution" value="4.10 A"/>
    <property type="chains" value="l8/n8/p8/r8=1-113"/>
</dbReference>
<dbReference type="PDB" id="8PR0">
    <property type="method" value="EM"/>
    <property type="resolution" value="9.40 A"/>
    <property type="chains" value="G/H=1-113"/>
</dbReference>
<dbReference type="PDB" id="8PR1">
    <property type="method" value="EM"/>
    <property type="resolution" value="8.20 A"/>
    <property type="chains" value="K/L=1-113"/>
</dbReference>
<dbReference type="PDB" id="8PTK">
    <property type="method" value="EM"/>
    <property type="resolution" value="10.00 A"/>
    <property type="chains" value="k/l/v/y=1-113"/>
</dbReference>
<dbReference type="PDB" id="8RGI">
    <property type="method" value="X-ray"/>
    <property type="resolution" value="2.02 A"/>
    <property type="chains" value="A=2-113"/>
</dbReference>
<dbReference type="PDBsum" id="5JPW"/>
<dbReference type="PDBsum" id="8J07"/>
<dbReference type="PDBsum" id="8PR0"/>
<dbReference type="PDBsum" id="8PR1"/>
<dbReference type="PDBsum" id="8PTK"/>
<dbReference type="PDBsum" id="8RGI"/>
<dbReference type="EMDB" id="EMD-17830"/>
<dbReference type="EMDB" id="EMD-17831"/>
<dbReference type="EMDB" id="EMD-17873"/>
<dbReference type="EMDB" id="EMD-35888"/>
<dbReference type="SMR" id="P63172"/>
<dbReference type="BioGRID" id="112853">
    <property type="interactions" value="246"/>
</dbReference>
<dbReference type="ComplexPortal" id="CPX-5025">
    <property type="entry name" value="Cytoplasmic dynein complex, variant 1"/>
</dbReference>
<dbReference type="CORUM" id="P63172"/>
<dbReference type="DIP" id="DIP-35251N"/>
<dbReference type="FunCoup" id="P63172">
    <property type="interactions" value="897"/>
</dbReference>
<dbReference type="IntAct" id="P63172">
    <property type="interactions" value="77"/>
</dbReference>
<dbReference type="MINT" id="P63172"/>
<dbReference type="STRING" id="9606.ENSP00000356056"/>
<dbReference type="GlyGen" id="P63172">
    <property type="glycosylation" value="1 site, 1 O-linked glycan (1 site)"/>
</dbReference>
<dbReference type="iPTMnet" id="P63172"/>
<dbReference type="PhosphoSitePlus" id="P63172"/>
<dbReference type="SwissPalm" id="P63172"/>
<dbReference type="BioMuta" id="DYNLT1"/>
<dbReference type="DMDM" id="52783582"/>
<dbReference type="jPOST" id="P63172"/>
<dbReference type="MassIVE" id="P63172"/>
<dbReference type="PaxDb" id="9606-ENSP00000356056"/>
<dbReference type="PeptideAtlas" id="P63172"/>
<dbReference type="ProteomicsDB" id="57502"/>
<dbReference type="Pumba" id="P63172"/>
<dbReference type="TopDownProteomics" id="P63172"/>
<dbReference type="ABCD" id="P63172">
    <property type="antibodies" value="1 sequenced antibody"/>
</dbReference>
<dbReference type="Antibodypedia" id="33440">
    <property type="antibodies" value="82 antibodies from 24 providers"/>
</dbReference>
<dbReference type="DNASU" id="6993"/>
<dbReference type="Ensembl" id="ENST00000367089.8">
    <property type="protein sequence ID" value="ENSP00000356056.3"/>
    <property type="gene ID" value="ENSG00000146425.11"/>
</dbReference>
<dbReference type="GeneID" id="6993"/>
<dbReference type="KEGG" id="hsa:6993"/>
<dbReference type="MANE-Select" id="ENST00000367089.8">
    <property type="protein sequence ID" value="ENSP00000356056.3"/>
    <property type="RefSeq nucleotide sequence ID" value="NM_006519.4"/>
    <property type="RefSeq protein sequence ID" value="NP_006510.1"/>
</dbReference>
<dbReference type="UCSC" id="uc003qrn.3">
    <property type="organism name" value="human"/>
</dbReference>
<dbReference type="AGR" id="HGNC:11697"/>
<dbReference type="CTD" id="6993"/>
<dbReference type="DisGeNET" id="6993"/>
<dbReference type="GeneCards" id="DYNLT1"/>
<dbReference type="HGNC" id="HGNC:11697">
    <property type="gene designation" value="DYNLT1"/>
</dbReference>
<dbReference type="HPA" id="ENSG00000146425">
    <property type="expression patterns" value="Low tissue specificity"/>
</dbReference>
<dbReference type="MIM" id="601554">
    <property type="type" value="gene"/>
</dbReference>
<dbReference type="neXtProt" id="NX_P63172"/>
<dbReference type="OpenTargets" id="ENSG00000146425"/>
<dbReference type="PharmGKB" id="PA36416"/>
<dbReference type="VEuPathDB" id="HostDB:ENSG00000146425"/>
<dbReference type="eggNOG" id="KOG4081">
    <property type="taxonomic scope" value="Eukaryota"/>
</dbReference>
<dbReference type="GeneTree" id="ENSGT00940000154531"/>
<dbReference type="HOGENOM" id="CLU_097204_7_2_1"/>
<dbReference type="InParanoid" id="P63172"/>
<dbReference type="OMA" id="VNQWTSA"/>
<dbReference type="OrthoDB" id="10059120at2759"/>
<dbReference type="PAN-GO" id="P63172">
    <property type="GO annotations" value="4 GO annotations based on evolutionary models"/>
</dbReference>
<dbReference type="PhylomeDB" id="P63172"/>
<dbReference type="TreeFam" id="TF313904"/>
<dbReference type="PathwayCommons" id="P63172"/>
<dbReference type="Reactome" id="R-HSA-6798695">
    <property type="pathway name" value="Neutrophil degranulation"/>
</dbReference>
<dbReference type="SignaLink" id="P63172"/>
<dbReference type="SIGNOR" id="P63172"/>
<dbReference type="BioGRID-ORCS" id="6993">
    <property type="hits" value="27 hits in 1158 CRISPR screens"/>
</dbReference>
<dbReference type="ChiTaRS" id="DYNLT1">
    <property type="organism name" value="human"/>
</dbReference>
<dbReference type="GeneWiki" id="DYNLT1"/>
<dbReference type="GenomeRNAi" id="6993"/>
<dbReference type="Pharos" id="P63172">
    <property type="development level" value="Tbio"/>
</dbReference>
<dbReference type="PRO" id="PR:P63172"/>
<dbReference type="Proteomes" id="UP000005640">
    <property type="component" value="Chromosome 6"/>
</dbReference>
<dbReference type="RNAct" id="P63172">
    <property type="molecule type" value="protein"/>
</dbReference>
<dbReference type="Bgee" id="ENSG00000146425">
    <property type="expression patterns" value="Expressed in bronchial epithelial cell and 211 other cell types or tissues"/>
</dbReference>
<dbReference type="GO" id="GO:0005737">
    <property type="term" value="C:cytoplasm"/>
    <property type="evidence" value="ECO:0000318"/>
    <property type="project" value="GO_Central"/>
</dbReference>
<dbReference type="GO" id="GO:0005868">
    <property type="term" value="C:cytoplasmic dynein complex"/>
    <property type="evidence" value="ECO:0000314"/>
    <property type="project" value="GO_Central"/>
</dbReference>
<dbReference type="GO" id="GO:0005881">
    <property type="term" value="C:cytoplasmic microtubule"/>
    <property type="evidence" value="ECO:0000314"/>
    <property type="project" value="GO_Central"/>
</dbReference>
<dbReference type="GO" id="GO:0030286">
    <property type="term" value="C:dynein complex"/>
    <property type="evidence" value="ECO:0000353"/>
    <property type="project" value="ComplexPortal"/>
</dbReference>
<dbReference type="GO" id="GO:0005576">
    <property type="term" value="C:extracellular region"/>
    <property type="evidence" value="ECO:0000304"/>
    <property type="project" value="Reactome"/>
</dbReference>
<dbReference type="GO" id="GO:1904813">
    <property type="term" value="C:ficolin-1-rich granule lumen"/>
    <property type="evidence" value="ECO:0000304"/>
    <property type="project" value="Reactome"/>
</dbReference>
<dbReference type="GO" id="GO:0005794">
    <property type="term" value="C:Golgi apparatus"/>
    <property type="evidence" value="ECO:0007669"/>
    <property type="project" value="UniProtKB-SubCell"/>
</dbReference>
<dbReference type="GO" id="GO:0043657">
    <property type="term" value="C:host cell"/>
    <property type="evidence" value="ECO:0007669"/>
    <property type="project" value="GOC"/>
</dbReference>
<dbReference type="GO" id="GO:0034774">
    <property type="term" value="C:secretory granule lumen"/>
    <property type="evidence" value="ECO:0000304"/>
    <property type="project" value="Reactome"/>
</dbReference>
<dbReference type="GO" id="GO:0099503">
    <property type="term" value="C:secretory vesicle"/>
    <property type="evidence" value="ECO:0000314"/>
    <property type="project" value="GO_Central"/>
</dbReference>
<dbReference type="GO" id="GO:0005819">
    <property type="term" value="C:spindle"/>
    <property type="evidence" value="ECO:0007669"/>
    <property type="project" value="UniProtKB-SubCell"/>
</dbReference>
<dbReference type="GO" id="GO:0045505">
    <property type="term" value="F:dynein intermediate chain binding"/>
    <property type="evidence" value="ECO:0000318"/>
    <property type="project" value="GO_Central"/>
</dbReference>
<dbReference type="GO" id="GO:0042802">
    <property type="term" value="F:identical protein binding"/>
    <property type="evidence" value="ECO:0000353"/>
    <property type="project" value="UniProtKB"/>
</dbReference>
<dbReference type="GO" id="GO:0051301">
    <property type="term" value="P:cell division"/>
    <property type="evidence" value="ECO:0007669"/>
    <property type="project" value="UniProtKB-KW"/>
</dbReference>
<dbReference type="GO" id="GO:0000132">
    <property type="term" value="P:establishment of mitotic spindle orientation"/>
    <property type="evidence" value="ECO:0000250"/>
    <property type="project" value="UniProtKB"/>
</dbReference>
<dbReference type="GO" id="GO:0019060">
    <property type="term" value="P:intracellular transport of viral protein in host cell"/>
    <property type="evidence" value="ECO:0000315"/>
    <property type="project" value="UniProtKB"/>
</dbReference>
<dbReference type="GO" id="GO:0007018">
    <property type="term" value="P:microtubule-based movement"/>
    <property type="evidence" value="ECO:0000318"/>
    <property type="project" value="GO_Central"/>
</dbReference>
<dbReference type="GO" id="GO:0075521">
    <property type="term" value="P:microtubule-dependent intracellular transport of viral material towards nucleus"/>
    <property type="evidence" value="ECO:0007669"/>
    <property type="project" value="UniProtKB-KW"/>
</dbReference>
<dbReference type="GO" id="GO:0050768">
    <property type="term" value="P:negative regulation of neurogenesis"/>
    <property type="evidence" value="ECO:0000250"/>
    <property type="project" value="UniProtKB"/>
</dbReference>
<dbReference type="GO" id="GO:0007399">
    <property type="term" value="P:nervous system development"/>
    <property type="evidence" value="ECO:0007669"/>
    <property type="project" value="UniProtKB-KW"/>
</dbReference>
<dbReference type="GO" id="GO:0008277">
    <property type="term" value="P:regulation of G protein-coupled receptor signaling pathway"/>
    <property type="evidence" value="ECO:0000250"/>
    <property type="project" value="UniProtKB"/>
</dbReference>
<dbReference type="GO" id="GO:0046718">
    <property type="term" value="P:symbiont entry into host cell"/>
    <property type="evidence" value="ECO:0007669"/>
    <property type="project" value="UniProtKB-KW"/>
</dbReference>
<dbReference type="CDD" id="cd21462">
    <property type="entry name" value="DLC-like_DYNLT1"/>
    <property type="match status" value="1"/>
</dbReference>
<dbReference type="FunFam" id="3.30.1140.40:FF:000001">
    <property type="entry name" value="Dynein light chain Tctex-type 1"/>
    <property type="match status" value="1"/>
</dbReference>
<dbReference type="Gene3D" id="3.30.1140.40">
    <property type="entry name" value="Tctex-1"/>
    <property type="match status" value="1"/>
</dbReference>
<dbReference type="InterPro" id="IPR005334">
    <property type="entry name" value="Tctex-1-like"/>
</dbReference>
<dbReference type="InterPro" id="IPR038586">
    <property type="entry name" value="Tctex-1-like_sf"/>
</dbReference>
<dbReference type="PANTHER" id="PTHR21255:SF19">
    <property type="entry name" value="DYNEIN LIGHT CHAIN TCTEX-TYPE 1"/>
    <property type="match status" value="1"/>
</dbReference>
<dbReference type="PANTHER" id="PTHR21255">
    <property type="entry name" value="T-COMPLEX-ASSOCIATED-TESTIS-EXPRESSED 1/ DYNEIN LIGHT CHAIN"/>
    <property type="match status" value="1"/>
</dbReference>
<dbReference type="Pfam" id="PF03645">
    <property type="entry name" value="Tctex-1"/>
    <property type="match status" value="1"/>
</dbReference>
<feature type="chain" id="PRO_0000195152" description="Dynein light chain Tctex-type 1">
    <location>
        <begin position="1"/>
        <end position="113"/>
    </location>
</feature>
<feature type="region of interest" description="Interaction with GNB1" evidence="1">
    <location>
        <begin position="41"/>
        <end position="113"/>
    </location>
</feature>
<feature type="modified residue" description="N-acetylmethionine" evidence="12 13 14">
    <location>
        <position position="1"/>
    </location>
</feature>
<feature type="helix" evidence="15">
    <location>
        <begin position="1"/>
        <end position="3"/>
    </location>
</feature>
<feature type="turn" evidence="15">
    <location>
        <begin position="8"/>
        <end position="10"/>
    </location>
</feature>
<feature type="helix" evidence="16">
    <location>
        <begin position="14"/>
        <end position="29"/>
    </location>
</feature>
<feature type="helix" evidence="16">
    <location>
        <begin position="36"/>
        <end position="38"/>
    </location>
</feature>
<feature type="helix" evidence="16">
    <location>
        <begin position="39"/>
        <end position="55"/>
    </location>
</feature>
<feature type="strand" evidence="16">
    <location>
        <begin position="60"/>
        <end position="71"/>
    </location>
</feature>
<feature type="turn" evidence="15">
    <location>
        <begin position="72"/>
        <end position="74"/>
    </location>
</feature>
<feature type="strand" evidence="16">
    <location>
        <begin position="77"/>
        <end position="85"/>
    </location>
</feature>
<feature type="turn" evidence="16">
    <location>
        <begin position="87"/>
        <end position="89"/>
    </location>
</feature>
<feature type="strand" evidence="16">
    <location>
        <begin position="91"/>
        <end position="98"/>
    </location>
</feature>
<feature type="strand" evidence="16">
    <location>
        <begin position="100"/>
        <end position="112"/>
    </location>
</feature>
<proteinExistence type="evidence at protein level"/>
<keyword id="KW-0002">3D-structure</keyword>
<keyword id="KW-0007">Acetylation</keyword>
<keyword id="KW-0131">Cell cycle</keyword>
<keyword id="KW-0132">Cell division</keyword>
<keyword id="KW-0963">Cytoplasm</keyword>
<keyword id="KW-1176">Cytoplasmic inwards viral transport</keyword>
<keyword id="KW-0206">Cytoskeleton</keyword>
<keyword id="KW-0243">Dynein</keyword>
<keyword id="KW-0333">Golgi apparatus</keyword>
<keyword id="KW-0945">Host-virus interaction</keyword>
<keyword id="KW-1177">Microtubular inwards viral transport</keyword>
<keyword id="KW-0493">Microtubule</keyword>
<keyword id="KW-0498">Mitosis</keyword>
<keyword id="KW-0505">Motor protein</keyword>
<keyword id="KW-0524">Neurogenesis</keyword>
<keyword id="KW-0597">Phosphoprotein</keyword>
<keyword id="KW-1267">Proteomics identification</keyword>
<keyword id="KW-1185">Reference proteome</keyword>
<keyword id="KW-0813">Transport</keyword>
<keyword id="KW-1160">Virus entry into host cell</keyword>
<organism>
    <name type="scientific">Homo sapiens</name>
    <name type="common">Human</name>
    <dbReference type="NCBI Taxonomy" id="9606"/>
    <lineage>
        <taxon>Eukaryota</taxon>
        <taxon>Metazoa</taxon>
        <taxon>Chordata</taxon>
        <taxon>Craniata</taxon>
        <taxon>Vertebrata</taxon>
        <taxon>Euteleostomi</taxon>
        <taxon>Mammalia</taxon>
        <taxon>Eutheria</taxon>
        <taxon>Euarchontoglires</taxon>
        <taxon>Primates</taxon>
        <taxon>Haplorrhini</taxon>
        <taxon>Catarrhini</taxon>
        <taxon>Hominidae</taxon>
        <taxon>Homo</taxon>
    </lineage>
</organism>
<reference key="1">
    <citation type="submission" date="1996-07" db="EMBL/GenBank/DDBJ databases">
        <authorList>
            <person name="Cao X.M."/>
            <person name="Solecki D.J."/>
            <person name="Wimmer E."/>
        </authorList>
    </citation>
    <scope>NUCLEOTIDE SEQUENCE [MRNA]</scope>
</reference>
<reference key="2">
    <citation type="journal article" date="1996" name="Cytogenet. Cell Genet.">
        <title>Cloning, expression, and mapping of TCTEL1, a putative human homologue of murine Tcte1, to 6q.</title>
        <authorList>
            <person name="Watanabe T.K."/>
            <person name="Fujiwara T."/>
            <person name="Shimizu F."/>
            <person name="Okuno S."/>
            <person name="Suzuki M."/>
            <person name="Takahashi E."/>
            <person name="Nakamura Y."/>
            <person name="Hirai Y."/>
        </authorList>
    </citation>
    <scope>NUCLEOTIDE SEQUENCE [MRNA]</scope>
    <source>
        <tissue>Fetal brain</tissue>
    </source>
</reference>
<reference key="3">
    <citation type="submission" date="2008-07" db="EMBL/GenBank/DDBJ databases">
        <authorList>
            <person name="Indu S."/>
            <person name="Laloraya M."/>
            <person name="Kumar P.G."/>
        </authorList>
    </citation>
    <scope>NUCLEOTIDE SEQUENCE [MRNA]</scope>
    <source>
        <tissue>Testis</tissue>
    </source>
</reference>
<reference key="4">
    <citation type="journal article" date="2004" name="Nat. Genet.">
        <title>Complete sequencing and characterization of 21,243 full-length human cDNAs.</title>
        <authorList>
            <person name="Ota T."/>
            <person name="Suzuki Y."/>
            <person name="Nishikawa T."/>
            <person name="Otsuki T."/>
            <person name="Sugiyama T."/>
            <person name="Irie R."/>
            <person name="Wakamatsu A."/>
            <person name="Hayashi K."/>
            <person name="Sato H."/>
            <person name="Nagai K."/>
            <person name="Kimura K."/>
            <person name="Makita H."/>
            <person name="Sekine M."/>
            <person name="Obayashi M."/>
            <person name="Nishi T."/>
            <person name="Shibahara T."/>
            <person name="Tanaka T."/>
            <person name="Ishii S."/>
            <person name="Yamamoto J."/>
            <person name="Saito K."/>
            <person name="Kawai Y."/>
            <person name="Isono Y."/>
            <person name="Nakamura Y."/>
            <person name="Nagahari K."/>
            <person name="Murakami K."/>
            <person name="Yasuda T."/>
            <person name="Iwayanagi T."/>
            <person name="Wagatsuma M."/>
            <person name="Shiratori A."/>
            <person name="Sudo H."/>
            <person name="Hosoiri T."/>
            <person name="Kaku Y."/>
            <person name="Kodaira H."/>
            <person name="Kondo H."/>
            <person name="Sugawara M."/>
            <person name="Takahashi M."/>
            <person name="Kanda K."/>
            <person name="Yokoi T."/>
            <person name="Furuya T."/>
            <person name="Kikkawa E."/>
            <person name="Omura Y."/>
            <person name="Abe K."/>
            <person name="Kamihara K."/>
            <person name="Katsuta N."/>
            <person name="Sato K."/>
            <person name="Tanikawa M."/>
            <person name="Yamazaki M."/>
            <person name="Ninomiya K."/>
            <person name="Ishibashi T."/>
            <person name="Yamashita H."/>
            <person name="Murakawa K."/>
            <person name="Fujimori K."/>
            <person name="Tanai H."/>
            <person name="Kimata M."/>
            <person name="Watanabe M."/>
            <person name="Hiraoka S."/>
            <person name="Chiba Y."/>
            <person name="Ishida S."/>
            <person name="Ono Y."/>
            <person name="Takiguchi S."/>
            <person name="Watanabe S."/>
            <person name="Yosida M."/>
            <person name="Hotuta T."/>
            <person name="Kusano J."/>
            <person name="Kanehori K."/>
            <person name="Takahashi-Fujii A."/>
            <person name="Hara H."/>
            <person name="Tanase T.-O."/>
            <person name="Nomura Y."/>
            <person name="Togiya S."/>
            <person name="Komai F."/>
            <person name="Hara R."/>
            <person name="Takeuchi K."/>
            <person name="Arita M."/>
            <person name="Imose N."/>
            <person name="Musashino K."/>
            <person name="Yuuki H."/>
            <person name="Oshima A."/>
            <person name="Sasaki N."/>
            <person name="Aotsuka S."/>
            <person name="Yoshikawa Y."/>
            <person name="Matsunawa H."/>
            <person name="Ichihara T."/>
            <person name="Shiohata N."/>
            <person name="Sano S."/>
            <person name="Moriya S."/>
            <person name="Momiyama H."/>
            <person name="Satoh N."/>
            <person name="Takami S."/>
            <person name="Terashima Y."/>
            <person name="Suzuki O."/>
            <person name="Nakagawa S."/>
            <person name="Senoh A."/>
            <person name="Mizoguchi H."/>
            <person name="Goto Y."/>
            <person name="Shimizu F."/>
            <person name="Wakebe H."/>
            <person name="Hishigaki H."/>
            <person name="Watanabe T."/>
            <person name="Sugiyama A."/>
            <person name="Takemoto M."/>
            <person name="Kawakami B."/>
            <person name="Yamazaki M."/>
            <person name="Watanabe K."/>
            <person name="Kumagai A."/>
            <person name="Itakura S."/>
            <person name="Fukuzumi Y."/>
            <person name="Fujimori Y."/>
            <person name="Komiyama M."/>
            <person name="Tashiro H."/>
            <person name="Tanigami A."/>
            <person name="Fujiwara T."/>
            <person name="Ono T."/>
            <person name="Yamada K."/>
            <person name="Fujii Y."/>
            <person name="Ozaki K."/>
            <person name="Hirao M."/>
            <person name="Ohmori Y."/>
            <person name="Kawabata A."/>
            <person name="Hikiji T."/>
            <person name="Kobatake N."/>
            <person name="Inagaki H."/>
            <person name="Ikema Y."/>
            <person name="Okamoto S."/>
            <person name="Okitani R."/>
            <person name="Kawakami T."/>
            <person name="Noguchi S."/>
            <person name="Itoh T."/>
            <person name="Shigeta K."/>
            <person name="Senba T."/>
            <person name="Matsumura K."/>
            <person name="Nakajima Y."/>
            <person name="Mizuno T."/>
            <person name="Morinaga M."/>
            <person name="Sasaki M."/>
            <person name="Togashi T."/>
            <person name="Oyama M."/>
            <person name="Hata H."/>
            <person name="Watanabe M."/>
            <person name="Komatsu T."/>
            <person name="Mizushima-Sugano J."/>
            <person name="Satoh T."/>
            <person name="Shirai Y."/>
            <person name="Takahashi Y."/>
            <person name="Nakagawa K."/>
            <person name="Okumura K."/>
            <person name="Nagase T."/>
            <person name="Nomura N."/>
            <person name="Kikuchi H."/>
            <person name="Masuho Y."/>
            <person name="Yamashita R."/>
            <person name="Nakai K."/>
            <person name="Yada T."/>
            <person name="Nakamura Y."/>
            <person name="Ohara O."/>
            <person name="Isogai T."/>
            <person name="Sugano S."/>
        </authorList>
    </citation>
    <scope>NUCLEOTIDE SEQUENCE [LARGE SCALE MRNA]</scope>
    <source>
        <tissue>Skeletal muscle</tissue>
    </source>
</reference>
<reference key="5">
    <citation type="submission" date="2004-06" db="EMBL/GenBank/DDBJ databases">
        <title>Cloning of human full open reading frames in Gateway(TM) system entry vector (pDONR201).</title>
        <authorList>
            <person name="Ebert L."/>
            <person name="Schick M."/>
            <person name="Neubert P."/>
            <person name="Schatten R."/>
            <person name="Henze S."/>
            <person name="Korn B."/>
        </authorList>
    </citation>
    <scope>NUCLEOTIDE SEQUENCE [LARGE SCALE MRNA]</scope>
</reference>
<reference key="6">
    <citation type="journal article" date="2003" name="Nature">
        <title>The DNA sequence and analysis of human chromosome 6.</title>
        <authorList>
            <person name="Mungall A.J."/>
            <person name="Palmer S.A."/>
            <person name="Sims S.K."/>
            <person name="Edwards C.A."/>
            <person name="Ashurst J.L."/>
            <person name="Wilming L."/>
            <person name="Jones M.C."/>
            <person name="Horton R."/>
            <person name="Hunt S.E."/>
            <person name="Scott C.E."/>
            <person name="Gilbert J.G.R."/>
            <person name="Clamp M.E."/>
            <person name="Bethel G."/>
            <person name="Milne S."/>
            <person name="Ainscough R."/>
            <person name="Almeida J.P."/>
            <person name="Ambrose K.D."/>
            <person name="Andrews T.D."/>
            <person name="Ashwell R.I.S."/>
            <person name="Babbage A.K."/>
            <person name="Bagguley C.L."/>
            <person name="Bailey J."/>
            <person name="Banerjee R."/>
            <person name="Barker D.J."/>
            <person name="Barlow K.F."/>
            <person name="Bates K."/>
            <person name="Beare D.M."/>
            <person name="Beasley H."/>
            <person name="Beasley O."/>
            <person name="Bird C.P."/>
            <person name="Blakey S.E."/>
            <person name="Bray-Allen S."/>
            <person name="Brook J."/>
            <person name="Brown A.J."/>
            <person name="Brown J.Y."/>
            <person name="Burford D.C."/>
            <person name="Burrill W."/>
            <person name="Burton J."/>
            <person name="Carder C."/>
            <person name="Carter N.P."/>
            <person name="Chapman J.C."/>
            <person name="Clark S.Y."/>
            <person name="Clark G."/>
            <person name="Clee C.M."/>
            <person name="Clegg S."/>
            <person name="Cobley V."/>
            <person name="Collier R.E."/>
            <person name="Collins J.E."/>
            <person name="Colman L.K."/>
            <person name="Corby N.R."/>
            <person name="Coville G.J."/>
            <person name="Culley K.M."/>
            <person name="Dhami P."/>
            <person name="Davies J."/>
            <person name="Dunn M."/>
            <person name="Earthrowl M.E."/>
            <person name="Ellington A.E."/>
            <person name="Evans K.A."/>
            <person name="Faulkner L."/>
            <person name="Francis M.D."/>
            <person name="Frankish A."/>
            <person name="Frankland J."/>
            <person name="French L."/>
            <person name="Garner P."/>
            <person name="Garnett J."/>
            <person name="Ghori M.J."/>
            <person name="Gilby L.M."/>
            <person name="Gillson C.J."/>
            <person name="Glithero R.J."/>
            <person name="Grafham D.V."/>
            <person name="Grant M."/>
            <person name="Gribble S."/>
            <person name="Griffiths C."/>
            <person name="Griffiths M.N.D."/>
            <person name="Hall R."/>
            <person name="Halls K.S."/>
            <person name="Hammond S."/>
            <person name="Harley J.L."/>
            <person name="Hart E.A."/>
            <person name="Heath P.D."/>
            <person name="Heathcott R."/>
            <person name="Holmes S.J."/>
            <person name="Howden P.J."/>
            <person name="Howe K.L."/>
            <person name="Howell G.R."/>
            <person name="Huckle E."/>
            <person name="Humphray S.J."/>
            <person name="Humphries M.D."/>
            <person name="Hunt A.R."/>
            <person name="Johnson C.M."/>
            <person name="Joy A.A."/>
            <person name="Kay M."/>
            <person name="Keenan S.J."/>
            <person name="Kimberley A.M."/>
            <person name="King A."/>
            <person name="Laird G.K."/>
            <person name="Langford C."/>
            <person name="Lawlor S."/>
            <person name="Leongamornlert D.A."/>
            <person name="Leversha M."/>
            <person name="Lloyd C.R."/>
            <person name="Lloyd D.M."/>
            <person name="Loveland J.E."/>
            <person name="Lovell J."/>
            <person name="Martin S."/>
            <person name="Mashreghi-Mohammadi M."/>
            <person name="Maslen G.L."/>
            <person name="Matthews L."/>
            <person name="McCann O.T."/>
            <person name="McLaren S.J."/>
            <person name="McLay K."/>
            <person name="McMurray A."/>
            <person name="Moore M.J.F."/>
            <person name="Mullikin J.C."/>
            <person name="Niblett D."/>
            <person name="Nickerson T."/>
            <person name="Novik K.L."/>
            <person name="Oliver K."/>
            <person name="Overton-Larty E.K."/>
            <person name="Parker A."/>
            <person name="Patel R."/>
            <person name="Pearce A.V."/>
            <person name="Peck A.I."/>
            <person name="Phillimore B.J.C.T."/>
            <person name="Phillips S."/>
            <person name="Plumb R.W."/>
            <person name="Porter K.M."/>
            <person name="Ramsey Y."/>
            <person name="Ranby S.A."/>
            <person name="Rice C.M."/>
            <person name="Ross M.T."/>
            <person name="Searle S.M."/>
            <person name="Sehra H.K."/>
            <person name="Sheridan E."/>
            <person name="Skuce C.D."/>
            <person name="Smith S."/>
            <person name="Smith M."/>
            <person name="Spraggon L."/>
            <person name="Squares S.L."/>
            <person name="Steward C.A."/>
            <person name="Sycamore N."/>
            <person name="Tamlyn-Hall G."/>
            <person name="Tester J."/>
            <person name="Theaker A.J."/>
            <person name="Thomas D.W."/>
            <person name="Thorpe A."/>
            <person name="Tracey A."/>
            <person name="Tromans A."/>
            <person name="Tubby B."/>
            <person name="Wall M."/>
            <person name="Wallis J.M."/>
            <person name="West A.P."/>
            <person name="White S.S."/>
            <person name="Whitehead S.L."/>
            <person name="Whittaker H."/>
            <person name="Wild A."/>
            <person name="Willey D.J."/>
            <person name="Wilmer T.E."/>
            <person name="Wood J.M."/>
            <person name="Wray P.W."/>
            <person name="Wyatt J.C."/>
            <person name="Young L."/>
            <person name="Younger R.M."/>
            <person name="Bentley D.R."/>
            <person name="Coulson A."/>
            <person name="Durbin R.M."/>
            <person name="Hubbard T."/>
            <person name="Sulston J.E."/>
            <person name="Dunham I."/>
            <person name="Rogers J."/>
            <person name="Beck S."/>
        </authorList>
    </citation>
    <scope>NUCLEOTIDE SEQUENCE [LARGE SCALE GENOMIC DNA]</scope>
</reference>
<reference key="7">
    <citation type="submission" date="2005-09" db="EMBL/GenBank/DDBJ databases">
        <authorList>
            <person name="Mural R.J."/>
            <person name="Istrail S."/>
            <person name="Sutton G."/>
            <person name="Florea L."/>
            <person name="Halpern A.L."/>
            <person name="Mobarry C.M."/>
            <person name="Lippert R."/>
            <person name="Walenz B."/>
            <person name="Shatkay H."/>
            <person name="Dew I."/>
            <person name="Miller J.R."/>
            <person name="Flanigan M.J."/>
            <person name="Edwards N.J."/>
            <person name="Bolanos R."/>
            <person name="Fasulo D."/>
            <person name="Halldorsson B.V."/>
            <person name="Hannenhalli S."/>
            <person name="Turner R."/>
            <person name="Yooseph S."/>
            <person name="Lu F."/>
            <person name="Nusskern D.R."/>
            <person name="Shue B.C."/>
            <person name="Zheng X.H."/>
            <person name="Zhong F."/>
            <person name="Delcher A.L."/>
            <person name="Huson D.H."/>
            <person name="Kravitz S.A."/>
            <person name="Mouchard L."/>
            <person name="Reinert K."/>
            <person name="Remington K.A."/>
            <person name="Clark A.G."/>
            <person name="Waterman M.S."/>
            <person name="Eichler E.E."/>
            <person name="Adams M.D."/>
            <person name="Hunkapiller M.W."/>
            <person name="Myers E.W."/>
            <person name="Venter J.C."/>
        </authorList>
    </citation>
    <scope>NUCLEOTIDE SEQUENCE [LARGE SCALE GENOMIC DNA]</scope>
</reference>
<reference key="8">
    <citation type="journal article" date="2004" name="Genome Res.">
        <title>The status, quality, and expansion of the NIH full-length cDNA project: the Mammalian Gene Collection (MGC).</title>
        <authorList>
            <consortium name="The MGC Project Team"/>
        </authorList>
    </citation>
    <scope>NUCLEOTIDE SEQUENCE [LARGE SCALE MRNA]</scope>
    <source>
        <tissue>Brain</tissue>
    </source>
</reference>
<reference key="9">
    <citation type="journal article" date="2002" name="J. Biol. Chem.">
        <title>Interaction of the poliovirus receptor CD155 with the dynein light chain Tctex-1 and its implication for poliovirus pathogenesis.</title>
        <authorList>
            <person name="Mueller S."/>
            <person name="Cao X."/>
            <person name="Welker R."/>
            <person name="Wimmer E."/>
        </authorList>
    </citation>
    <scope>INTERACTION WITH PVR</scope>
</reference>
<reference key="10">
    <citation type="journal article" date="2003" name="Hum. Mol. Genet.">
        <title>Functional interaction between BMPR-II and Tctex-1, a light chain of Dynein, is isoform-specific and disrupted by mutations underlying primary pulmonary hypertension.</title>
        <authorList>
            <person name="Machado R.D."/>
            <person name="Rudarakanchana N."/>
            <person name="Atkinson C."/>
            <person name="Flanagan J.A."/>
            <person name="Harrison R."/>
            <person name="Morrell N.W."/>
            <person name="Trembath R.C."/>
        </authorList>
    </citation>
    <scope>INTERACTION WITH BMPR2</scope>
    <scope>PHOSPHORYLATION</scope>
    <scope>TISSUE SPECIFICITY</scope>
</reference>
<reference key="11">
    <citation type="journal article" date="2004" name="J. Virol.">
        <title>Receptor (CD155)-dependent endocytosis of poliovirus and retrograde axonal transport of the endosome.</title>
        <authorList>
            <person name="Ohka S."/>
            <person name="Matsuda N."/>
            <person name="Tohyama K."/>
            <person name="Oda T."/>
            <person name="Morikawa M."/>
            <person name="Kuge S."/>
            <person name="Nomoto A."/>
        </authorList>
    </citation>
    <scope>INTERACTION WITH PVR</scope>
</reference>
<reference key="12">
    <citation type="journal article" date="2006" name="J. Cell Biol.">
        <title>Supervillin modulation of focal adhesions involving TRIP6/ZRP-1.</title>
        <authorList>
            <person name="Takizawa N."/>
            <person name="Smith T.C."/>
            <person name="Nebl T."/>
            <person name="Crowley J.L."/>
            <person name="Palmieri S.J."/>
            <person name="Lifshitz L.M."/>
            <person name="Ehrhardt A.G."/>
            <person name="Hoffman L.M."/>
            <person name="Beckerle M.C."/>
            <person name="Luna E.J."/>
        </authorList>
    </citation>
    <scope>INTERACTION WITH SVIL</scope>
</reference>
<reference key="13">
    <citation type="journal article" date="2007" name="J. Biol. Chem.">
        <title>Interaction of the DYNLT (TCTEX1/RP3) light chains and the intermediate chains reveals novel intersubunit regulation during assembly of the dynein complex.</title>
        <authorList>
            <person name="Lo K.W."/>
            <person name="Kogoy J.M."/>
            <person name="Rasoul B.A."/>
            <person name="King S.M."/>
            <person name="Pfister K.K."/>
        </authorList>
    </citation>
    <scope>SELF-ASSOCIATION</scope>
    <scope>INTERACTION WITH DYNC1I1 AND DYNC1I2</scope>
    <scope>SUBUNIT</scope>
</reference>
<reference key="14">
    <citation type="journal article" date="2008" name="Proc. Natl. Acad. Sci. U.S.A.">
        <title>D-retrovirus morphogenetic switch driven by the targeting signal accessibility to Tctex-1 of dynein.</title>
        <authorList>
            <person name="Vlach J."/>
            <person name="Lipov J."/>
            <person name="Rumlova M."/>
            <person name="Veverka V."/>
            <person name="Lang J."/>
            <person name="Srb P."/>
            <person name="Knejzlik Z."/>
            <person name="Pichova I."/>
            <person name="Hunter E."/>
            <person name="Hrabal R."/>
            <person name="Ruml T."/>
        </authorList>
    </citation>
    <scope>FUNCTION (MICROBIAL INFECTION)</scope>
    <scope>INTERACTION WITH MASON-PFIZER MONKEY VIRUS PROTEIN GAG (MICROBIAL INFECTION)</scope>
</reference>
<reference key="15">
    <citation type="journal article" date="2009" name="Anal. Chem.">
        <title>Lys-N and trypsin cover complementary parts of the phosphoproteome in a refined SCX-based approach.</title>
        <authorList>
            <person name="Gauci S."/>
            <person name="Helbig A.O."/>
            <person name="Slijper M."/>
            <person name="Krijgsveld J."/>
            <person name="Heck A.J."/>
            <person name="Mohammed S."/>
        </authorList>
    </citation>
    <scope>ACETYLATION [LARGE SCALE ANALYSIS] AT MET-1</scope>
    <scope>IDENTIFICATION BY MASS SPECTROMETRY [LARGE SCALE ANALYSIS]</scope>
</reference>
<reference key="16">
    <citation type="journal article" date="2011" name="BMC Syst. Biol.">
        <title>Initial characterization of the human central proteome.</title>
        <authorList>
            <person name="Burkard T.R."/>
            <person name="Planyavsky M."/>
            <person name="Kaupe I."/>
            <person name="Breitwieser F.P."/>
            <person name="Buerckstuemmer T."/>
            <person name="Bennett K.L."/>
            <person name="Superti-Furga G."/>
            <person name="Colinge J."/>
        </authorList>
    </citation>
    <scope>IDENTIFICATION BY MASS SPECTROMETRY [LARGE SCALE ANALYSIS]</scope>
</reference>
<reference key="17">
    <citation type="journal article" date="2011" name="Cell. Microbiol.">
        <title>Identification of the dynein light chains required for human papillomavirus infection.</title>
        <authorList>
            <person name="Schneider M.A."/>
            <person name="Spoden G.A."/>
            <person name="Florin L."/>
            <person name="Lambert C."/>
        </authorList>
    </citation>
    <scope>INTERACTION WITH HUMAN PAPILLOMAVIRUS 16 L2 PROTEIN (MICROBIAL INFECTION)</scope>
</reference>
<reference key="18">
    <citation type="journal article" date="2012" name="Mol. Cell. Proteomics">
        <title>Comparative large-scale characterisation of plant vs. mammal proteins reveals similar and idiosyncratic N-alpha acetylation features.</title>
        <authorList>
            <person name="Bienvenut W.V."/>
            <person name="Sumpton D."/>
            <person name="Martinez A."/>
            <person name="Lilla S."/>
            <person name="Espagne C."/>
            <person name="Meinnel T."/>
            <person name="Giglione C."/>
        </authorList>
    </citation>
    <scope>ACETYLATION [LARGE SCALE ANALYSIS] AT MET-1</scope>
    <scope>IDENTIFICATION BY MASS SPECTROMETRY [LARGE SCALE ANALYSIS]</scope>
</reference>
<reference key="19">
    <citation type="journal article" date="2015" name="Proteomics">
        <title>N-terminome analysis of the human mitochondrial proteome.</title>
        <authorList>
            <person name="Vaca Jacome A.S."/>
            <person name="Rabilloud T."/>
            <person name="Schaeffer-Reiss C."/>
            <person name="Rompais M."/>
            <person name="Ayoub D."/>
            <person name="Lane L."/>
            <person name="Bairoch A."/>
            <person name="Van Dorsselaer A."/>
            <person name="Carapito C."/>
        </authorList>
    </citation>
    <scope>ACETYLATION [LARGE SCALE ANALYSIS] AT MET-1</scope>
    <scope>IDENTIFICATION BY MASS SPECTROMETRY [LARGE SCALE ANALYSIS]</scope>
</reference>
<reference key="20">
    <citation type="journal article" date="2016" name="J. Biol. Chem.">
        <title>Molecular basis for the protein recognition specificity of the dynein light chain DYNLT1/Tctex1: characterization of the interaction with activin receptor IIB.</title>
        <authorList>
            <person name="Merino-Gracia J."/>
            <person name="Zamora-Carreras H."/>
            <person name="Bruix M."/>
            <person name="Rodriguez-Crespo I."/>
        </authorList>
    </citation>
    <scope>STRUCTURE BY NMR IN COMPLEX WITH DYNC1I2</scope>
    <scope>INTERACTION WITH ACVR2B AND ARHGEF2</scope>
    <scope>FUNCTION</scope>
</reference>
<comment type="function">
    <text>Acts as one of several non-catalytic accessory components of the cytoplasmic dynein 1 complex that are thought to be involved in linking dynein to cargos and to adapter proteins that regulate dynein function. Cytoplasmic dynein 1 acts as a motor for the intracellular retrograde motility of vesicles and organelles along microtubules. Binds to transport cargos and is involved in apical cargo transport such as rhodopsin-bearing vesicles in polarized epithelia. May also be a accessory component of axonemal dynein.</text>
</comment>
<comment type="function">
    <text evidence="1 10">Plays a role in neuronal morphogenesis; the function is independent of cytoplasmic dynein and seems to be coupled to regulation of the actin cytoskeleton by enhancing Rac1 activity. The function in neurogenesis may be regulated by association with a G-protein beta-gamma dimer. May function as a receptor-independent activator of heterotrimeric G-protein signaling; the activation appears to be independent of a nucleotide exchange. Plays a role in regulating neurogenesis; inhibits the genesis of neurons from precursor cells during cortical development presumably by antagonizing ARHGEF2. Involved in the regulation of mitotic spindle orientation (By similarity). Unrelated to the role in retrograde microtubule-associated movement may play a role in the dimerization of cytoplasmic proteins/domains such as for ACVR2B. Binds to the cytoplasmic domain of ACVR2B and, in vitro, inhibits ACVR2B signaling (PubMed:27502274).</text>
</comment>
<comment type="function">
    <text evidence="8">(Microbial infection) Is involved in intracellular targeting of D-type retrovirus gag polyproteins to the cytoplasmic assembly site.</text>
</comment>
<comment type="subunit">
    <text evidence="1 2 3 4 5 6 7 10 11">Homodimer (Probable). The cytoplasmic dynein 1 complex consists of two catalytic heavy chains (HCs) and a number of non-catalytic subunits presented by intermediate chains (ICs), light intermediate chains (LICs) and light chains (LCs); the composition seems to vary in respect to the IC, LIC and LC composition. The heavy chain homodimer serves as a scaffold for the probable homodimeric assembly of the respective non-catalytic subunits. The ICs and LICs bind directly to the HC dimer and the LCs assemble on the IC dimer. DYNLT1 and DYNLT3 compete for association with dynein IC (DYNC1I1 or DYNC1I2). Self-associates. Interacts with DYNC1I1 and DYNC1I2. Interacts with RHO. Interacts with DOC2A, DOC2B and SCN10A. Interacts with PVR. Interacts with SVIL isoform 2. Interacts with BMPR2. Interacts with GNB1; the interaction occurs in presence of guanine nucleotide-binding protein G(T) subunit gamma; the interaction diminishes the association of DYNLT1 with dynein IC (DYNC1I1 or DYNC1I2). Interacts with GNB2, GNB3 and GNB5; the interactions occur in presence of guanine nucleotide-binding protein G(T) subunit gamma (By similarity). Interacts with ACVR2B and ARHGEF2. Interacts with DNAI4 (By similarity). Interacts with CFAP61 (By similarity).</text>
</comment>
<comment type="subunit">
    <text evidence="9">(Microbial infection) Interacts with human papillomavirus 16 L2 protein; this interaction is essential for virus intracellular transport during entry.</text>
</comment>
<comment type="subunit">
    <text evidence="8">(Microbial infection) Interacts with Mason-Pfizer monkey virus protein Gag.</text>
</comment>
<comment type="interaction">
    <interactant intactId="EBI-1176455">
        <id>P63172</id>
    </interactant>
    <interactant intactId="EBI-9357295">
        <id>Q9BTE6-2</id>
        <label>AARSD1</label>
    </interactant>
    <organismsDiffer>false</organismsDiffer>
    <experiments>3</experiments>
</comment>
<comment type="interaction">
    <interactant intactId="EBI-1176455">
        <id>P63172</id>
    </interactant>
    <interactant intactId="EBI-12026476">
        <id>Q99424</id>
        <label>ACOX2</label>
    </interactant>
    <organismsDiffer>false</organismsDiffer>
    <experiments>3</experiments>
</comment>
<comment type="interaction">
    <interactant intactId="EBI-1176455">
        <id>P63172</id>
    </interactant>
    <interactant intactId="EBI-351710">
        <id>P12814</id>
        <label>ACTN1</label>
    </interactant>
    <organismsDiffer>false</organismsDiffer>
    <experiments>3</experiments>
</comment>
<comment type="interaction">
    <interactant intactId="EBI-1176455">
        <id>P63172</id>
    </interactant>
    <interactant intactId="EBI-11957452">
        <id>Q4LE39-3</id>
        <label>ARID4B</label>
    </interactant>
    <organismsDiffer>false</organismsDiffer>
    <experiments>3</experiments>
</comment>
<comment type="interaction">
    <interactant intactId="EBI-1176455">
        <id>P63172</id>
    </interactant>
    <interactant intactId="EBI-2813327">
        <id>Q9H2F9</id>
        <label>CCDC68</label>
    </interactant>
    <organismsDiffer>false</organismsDiffer>
    <experiments>3</experiments>
</comment>
<comment type="interaction">
    <interactant intactId="EBI-1176455">
        <id>P63172</id>
    </interactant>
    <interactant intactId="EBI-352957">
        <id>O60884</id>
        <label>DNAJA2</label>
    </interactant>
    <organismsDiffer>false</organismsDiffer>
    <experiments>3</experiments>
</comment>
<comment type="interaction">
    <interactant intactId="EBI-1176455">
        <id>P63172</id>
    </interactant>
    <interactant intactId="EBI-12094038">
        <id>Q13409-3</id>
        <label>DYNC1I2</label>
    </interactant>
    <organismsDiffer>false</organismsDiffer>
    <experiments>3</experiments>
</comment>
<comment type="interaction">
    <interactant intactId="EBI-1176455">
        <id>P63172</id>
    </interactant>
    <interactant intactId="EBI-2692044">
        <id>Q8WW35</id>
        <label>DYNLT2B</label>
    </interactant>
    <organismsDiffer>false</organismsDiffer>
    <experiments>6</experiments>
</comment>
<comment type="interaction">
    <interactant intactId="EBI-1176455">
        <id>P63172</id>
    </interactant>
    <interactant intactId="EBI-743027">
        <id>P51808</id>
        <label>DYNLT3</label>
    </interactant>
    <organismsDiffer>false</organismsDiffer>
    <experiments>4</experiments>
</comment>
<comment type="interaction">
    <interactant intactId="EBI-1176455">
        <id>P63172</id>
    </interactant>
    <interactant intactId="EBI-739361">
        <id>Q9UBY9</id>
        <label>HSPB7</label>
    </interactant>
    <organismsDiffer>false</organismsDiffer>
    <experiments>3</experiments>
</comment>
<comment type="interaction">
    <interactant intactId="EBI-1176455">
        <id>P63172</id>
    </interactant>
    <interactant intactId="EBI-1176448">
        <id>Q9BQS6</id>
        <label>HSPB9</label>
    </interactant>
    <organismsDiffer>false</organismsDiffer>
    <experiments>5</experiments>
</comment>
<comment type="interaction">
    <interactant intactId="EBI-1176455">
        <id>P63172</id>
    </interactant>
    <interactant intactId="EBI-8645371">
        <id>Q9H2R5</id>
        <label>KLK15</label>
    </interactant>
    <organismsDiffer>false</organismsDiffer>
    <experiments>3</experiments>
</comment>
<comment type="interaction">
    <interactant intactId="EBI-1176455">
        <id>P63172</id>
    </interactant>
    <interactant intactId="EBI-739832">
        <id>Q8TBB1</id>
        <label>LNX1</label>
    </interactant>
    <organismsDiffer>false</organismsDiffer>
    <experiments>3</experiments>
</comment>
<comment type="interaction">
    <interactant intactId="EBI-1176455">
        <id>P63172</id>
    </interactant>
    <interactant intactId="EBI-968587">
        <id>Q9P0L2</id>
        <label>MARK1</label>
    </interactant>
    <organismsDiffer>false</organismsDiffer>
    <experiments>3</experiments>
</comment>
<comment type="interaction">
    <interactant intactId="EBI-1176455">
        <id>P63172</id>
    </interactant>
    <interactant intactId="EBI-475646">
        <id>P07196</id>
        <label>NEFL</label>
    </interactant>
    <organismsDiffer>false</organismsDiffer>
    <experiments>3</experiments>
</comment>
<comment type="interaction">
    <interactant intactId="EBI-1176455">
        <id>P63172</id>
    </interactant>
    <interactant intactId="EBI-2859639">
        <id>Q5HYW2</id>
        <label>NHSL2</label>
    </interactant>
    <organismsDiffer>false</organismsDiffer>
    <experiments>3</experiments>
</comment>
<comment type="interaction">
    <interactant intactId="EBI-1176455">
        <id>P63172</id>
    </interactant>
    <interactant intactId="EBI-741158">
        <id>Q96HA8</id>
        <label>NTAQ1</label>
    </interactant>
    <organismsDiffer>false</organismsDiffer>
    <experiments>3</experiments>
</comment>
<comment type="interaction">
    <interactant intactId="EBI-1176455">
        <id>P63172</id>
    </interactant>
    <interactant intactId="EBI-12005356">
        <id>Q96PB7-3</id>
        <label>OLFM3</label>
    </interactant>
    <organismsDiffer>false</organismsDiffer>
    <experiments>3</experiments>
</comment>
<comment type="interaction">
    <interactant intactId="EBI-1176455">
        <id>P63172</id>
    </interactant>
    <interactant intactId="EBI-1043580">
        <id>Q9BRX2</id>
        <label>PELO</label>
    </interactant>
    <organismsDiffer>false</organismsDiffer>
    <experiments>3</experiments>
</comment>
<comment type="interaction">
    <interactant intactId="EBI-1176455">
        <id>P63172</id>
    </interactant>
    <interactant intactId="EBI-12138495">
        <id>Q99697-2</id>
        <label>PITX2</label>
    </interactant>
    <organismsDiffer>false</organismsDiffer>
    <experiments>3</experiments>
</comment>
<comment type="interaction">
    <interactant intactId="EBI-1176455">
        <id>P63172</id>
    </interactant>
    <interactant intactId="EBI-359352">
        <id>P25786</id>
        <label>PSMA1</label>
    </interactant>
    <organismsDiffer>false</organismsDiffer>
    <experiments>3</experiments>
</comment>
<comment type="interaction">
    <interactant intactId="EBI-1176455">
        <id>P63172</id>
    </interactant>
    <interactant intactId="EBI-1045772">
        <id>P49190</id>
        <label>PTH2R</label>
    </interactant>
    <organismsDiffer>false</organismsDiffer>
    <experiments>3</experiments>
</comment>
<comment type="interaction">
    <interactant intactId="EBI-1176455">
        <id>P63172</id>
    </interactant>
    <interactant intactId="EBI-752376">
        <id>Q7L523</id>
        <label>RRAGA</label>
    </interactant>
    <organismsDiffer>false</organismsDiffer>
    <experiments>3</experiments>
</comment>
<comment type="interaction">
    <interactant intactId="EBI-1176455">
        <id>P63172</id>
    </interactant>
    <interactant intactId="EBI-727004">
        <id>O00560</id>
        <label>SDCBP</label>
    </interactant>
    <organismsDiffer>false</organismsDiffer>
    <experiments>3</experiments>
</comment>
<comment type="interaction">
    <interactant intactId="EBI-1176455">
        <id>P63172</id>
    </interactant>
    <interactant intactId="EBI-11955057">
        <id>Q8N8B7-2</id>
        <label>TCEANC</label>
    </interactant>
    <organismsDiffer>false</organismsDiffer>
    <experiments>3</experiments>
</comment>
<comment type="interaction">
    <interactant intactId="EBI-1176455">
        <id>P63172</id>
    </interactant>
    <interactant intactId="EBI-357355">
        <id>Q9UBK9</id>
        <label>UXT</label>
    </interactant>
    <organismsDiffer>false</organismsDiffer>
    <experiments>3</experiments>
</comment>
<comment type="interaction">
    <interactant intactId="EBI-1176455">
        <id>P63172</id>
    </interactant>
    <interactant intactId="EBI-720609">
        <id>O76024</id>
        <label>WFS1</label>
    </interactant>
    <organismsDiffer>false</organismsDiffer>
    <experiments>3</experiments>
</comment>
<comment type="interaction">
    <interactant intactId="EBI-1176455">
        <id>P63172</id>
    </interactant>
    <interactant intactId="EBI-26359442">
        <id>A0A0H3MBG2</id>
        <label>CTL0223</label>
    </interactant>
    <organismsDiffer>true</organismsDiffer>
    <experiments>5</experiments>
</comment>
<comment type="interaction">
    <interactant intactId="EBI-1176455">
        <id>P63172</id>
    </interactant>
    <interactant intactId="EBI-15717123">
        <id>P07567</id>
        <label>gag</label>
    </interactant>
    <organismsDiffer>true</organismsDiffer>
    <experiments>2</experiments>
</comment>
<comment type="subcellular location">
    <subcellularLocation>
        <location evidence="1">Golgi apparatus</location>
    </subcellularLocation>
    <subcellularLocation>
        <location evidence="1">Cytoplasm</location>
    </subcellularLocation>
    <subcellularLocation>
        <location evidence="1">Cytoplasm</location>
        <location evidence="1">Cytoskeleton</location>
        <location evidence="1">Spindle</location>
    </subcellularLocation>
    <text evidence="1">Localizes to mitotic spindles.</text>
</comment>
<comment type="tissue specificity">
    <text evidence="4">Expressed in heart, placenta, skeletal muscle kidney, pancreas, spleen, prostate, testis, ovary, ileum and colon. Expressed in lung endothelial and smooth muscle cells (at protein level).</text>
</comment>
<comment type="PTM">
    <text evidence="1">Phosphorylated by BMPR2; the phosphorylation is abolished by BMPR2 mutations in exon 12 which lead to truncated forms of BMPR2 and which are linked to primary pulmonary hypertension (PPH1) [MIM:178600]. The phosphorylation status is proposed to regulate the association with the cytoplasmic dynein complex and may have role in cytoplasmic dynein cargo release (By similarity).</text>
</comment>
<comment type="similarity">
    <text evidence="11">Belongs to the dynein light chain Tctex-type family.</text>
</comment>
<protein>
    <recommendedName>
        <fullName>Dynein light chain Tctex-type 1</fullName>
    </recommendedName>
    <alternativeName>
        <fullName>Protein CW-1</fullName>
    </alternativeName>
    <alternativeName>
        <fullName>T-complex testis-specific protein 1 homolog</fullName>
    </alternativeName>
</protein>
<gene>
    <name type="primary">DYNLT1</name>
    <name type="synonym">TCTEL1</name>
    <name type="synonym">TCTEX-1</name>
    <name type="synonym">TCTEX1</name>
</gene>